<gene>
    <name type="primary">Yipf4</name>
</gene>
<keyword id="KW-0025">Alternative splicing</keyword>
<keyword id="KW-0333">Golgi apparatus</keyword>
<keyword id="KW-0472">Membrane</keyword>
<keyword id="KW-1185">Reference proteome</keyword>
<keyword id="KW-0812">Transmembrane</keyword>
<keyword id="KW-1133">Transmembrane helix</keyword>
<name>YIPF4_MOUSE</name>
<reference key="1">
    <citation type="journal article" date="2005" name="Science">
        <title>The transcriptional landscape of the mammalian genome.</title>
        <authorList>
            <person name="Carninci P."/>
            <person name="Kasukawa T."/>
            <person name="Katayama S."/>
            <person name="Gough J."/>
            <person name="Frith M.C."/>
            <person name="Maeda N."/>
            <person name="Oyama R."/>
            <person name="Ravasi T."/>
            <person name="Lenhard B."/>
            <person name="Wells C."/>
            <person name="Kodzius R."/>
            <person name="Shimokawa K."/>
            <person name="Bajic V.B."/>
            <person name="Brenner S.E."/>
            <person name="Batalov S."/>
            <person name="Forrest A.R."/>
            <person name="Zavolan M."/>
            <person name="Davis M.J."/>
            <person name="Wilming L.G."/>
            <person name="Aidinis V."/>
            <person name="Allen J.E."/>
            <person name="Ambesi-Impiombato A."/>
            <person name="Apweiler R."/>
            <person name="Aturaliya R.N."/>
            <person name="Bailey T.L."/>
            <person name="Bansal M."/>
            <person name="Baxter L."/>
            <person name="Beisel K.W."/>
            <person name="Bersano T."/>
            <person name="Bono H."/>
            <person name="Chalk A.M."/>
            <person name="Chiu K.P."/>
            <person name="Choudhary V."/>
            <person name="Christoffels A."/>
            <person name="Clutterbuck D.R."/>
            <person name="Crowe M.L."/>
            <person name="Dalla E."/>
            <person name="Dalrymple B.P."/>
            <person name="de Bono B."/>
            <person name="Della Gatta G."/>
            <person name="di Bernardo D."/>
            <person name="Down T."/>
            <person name="Engstrom P."/>
            <person name="Fagiolini M."/>
            <person name="Faulkner G."/>
            <person name="Fletcher C.F."/>
            <person name="Fukushima T."/>
            <person name="Furuno M."/>
            <person name="Futaki S."/>
            <person name="Gariboldi M."/>
            <person name="Georgii-Hemming P."/>
            <person name="Gingeras T.R."/>
            <person name="Gojobori T."/>
            <person name="Green R.E."/>
            <person name="Gustincich S."/>
            <person name="Harbers M."/>
            <person name="Hayashi Y."/>
            <person name="Hensch T.K."/>
            <person name="Hirokawa N."/>
            <person name="Hill D."/>
            <person name="Huminiecki L."/>
            <person name="Iacono M."/>
            <person name="Ikeo K."/>
            <person name="Iwama A."/>
            <person name="Ishikawa T."/>
            <person name="Jakt M."/>
            <person name="Kanapin A."/>
            <person name="Katoh M."/>
            <person name="Kawasawa Y."/>
            <person name="Kelso J."/>
            <person name="Kitamura H."/>
            <person name="Kitano H."/>
            <person name="Kollias G."/>
            <person name="Krishnan S.P."/>
            <person name="Kruger A."/>
            <person name="Kummerfeld S.K."/>
            <person name="Kurochkin I.V."/>
            <person name="Lareau L.F."/>
            <person name="Lazarevic D."/>
            <person name="Lipovich L."/>
            <person name="Liu J."/>
            <person name="Liuni S."/>
            <person name="McWilliam S."/>
            <person name="Madan Babu M."/>
            <person name="Madera M."/>
            <person name="Marchionni L."/>
            <person name="Matsuda H."/>
            <person name="Matsuzawa S."/>
            <person name="Miki H."/>
            <person name="Mignone F."/>
            <person name="Miyake S."/>
            <person name="Morris K."/>
            <person name="Mottagui-Tabar S."/>
            <person name="Mulder N."/>
            <person name="Nakano N."/>
            <person name="Nakauchi H."/>
            <person name="Ng P."/>
            <person name="Nilsson R."/>
            <person name="Nishiguchi S."/>
            <person name="Nishikawa S."/>
            <person name="Nori F."/>
            <person name="Ohara O."/>
            <person name="Okazaki Y."/>
            <person name="Orlando V."/>
            <person name="Pang K.C."/>
            <person name="Pavan W.J."/>
            <person name="Pavesi G."/>
            <person name="Pesole G."/>
            <person name="Petrovsky N."/>
            <person name="Piazza S."/>
            <person name="Reed J."/>
            <person name="Reid J.F."/>
            <person name="Ring B.Z."/>
            <person name="Ringwald M."/>
            <person name="Rost B."/>
            <person name="Ruan Y."/>
            <person name="Salzberg S.L."/>
            <person name="Sandelin A."/>
            <person name="Schneider C."/>
            <person name="Schoenbach C."/>
            <person name="Sekiguchi K."/>
            <person name="Semple C.A."/>
            <person name="Seno S."/>
            <person name="Sessa L."/>
            <person name="Sheng Y."/>
            <person name="Shibata Y."/>
            <person name="Shimada H."/>
            <person name="Shimada K."/>
            <person name="Silva D."/>
            <person name="Sinclair B."/>
            <person name="Sperling S."/>
            <person name="Stupka E."/>
            <person name="Sugiura K."/>
            <person name="Sultana R."/>
            <person name="Takenaka Y."/>
            <person name="Taki K."/>
            <person name="Tammoja K."/>
            <person name="Tan S.L."/>
            <person name="Tang S."/>
            <person name="Taylor M.S."/>
            <person name="Tegner J."/>
            <person name="Teichmann S.A."/>
            <person name="Ueda H.R."/>
            <person name="van Nimwegen E."/>
            <person name="Verardo R."/>
            <person name="Wei C.L."/>
            <person name="Yagi K."/>
            <person name="Yamanishi H."/>
            <person name="Zabarovsky E."/>
            <person name="Zhu S."/>
            <person name="Zimmer A."/>
            <person name="Hide W."/>
            <person name="Bult C."/>
            <person name="Grimmond S.M."/>
            <person name="Teasdale R.D."/>
            <person name="Liu E.T."/>
            <person name="Brusic V."/>
            <person name="Quackenbush J."/>
            <person name="Wahlestedt C."/>
            <person name="Mattick J.S."/>
            <person name="Hume D.A."/>
            <person name="Kai C."/>
            <person name="Sasaki D."/>
            <person name="Tomaru Y."/>
            <person name="Fukuda S."/>
            <person name="Kanamori-Katayama M."/>
            <person name="Suzuki M."/>
            <person name="Aoki J."/>
            <person name="Arakawa T."/>
            <person name="Iida J."/>
            <person name="Imamura K."/>
            <person name="Itoh M."/>
            <person name="Kato T."/>
            <person name="Kawaji H."/>
            <person name="Kawagashira N."/>
            <person name="Kawashima T."/>
            <person name="Kojima M."/>
            <person name="Kondo S."/>
            <person name="Konno H."/>
            <person name="Nakano K."/>
            <person name="Ninomiya N."/>
            <person name="Nishio T."/>
            <person name="Okada M."/>
            <person name="Plessy C."/>
            <person name="Shibata K."/>
            <person name="Shiraki T."/>
            <person name="Suzuki S."/>
            <person name="Tagami M."/>
            <person name="Waki K."/>
            <person name="Watahiki A."/>
            <person name="Okamura-Oho Y."/>
            <person name="Suzuki H."/>
            <person name="Kawai J."/>
            <person name="Hayashizaki Y."/>
        </authorList>
    </citation>
    <scope>NUCLEOTIDE SEQUENCE [LARGE SCALE MRNA] (ISOFORM 1)</scope>
    <source>
        <strain>C57BL/6J</strain>
        <tissue>Mammary gland</tissue>
        <tissue>Pancreas</tissue>
    </source>
</reference>
<reference key="2">
    <citation type="journal article" date="2004" name="Genome Res.">
        <title>The status, quality, and expansion of the NIH full-length cDNA project: the Mammalian Gene Collection (MGC).</title>
        <authorList>
            <consortium name="The MGC Project Team"/>
        </authorList>
    </citation>
    <scope>NUCLEOTIDE SEQUENCE [LARGE SCALE MRNA] (ISOFORM 2)</scope>
    <source>
        <tissue>Mammary tumor</tissue>
    </source>
</reference>
<reference key="3">
    <citation type="journal article" date="2010" name="Cell">
        <title>A tissue-specific atlas of mouse protein phosphorylation and expression.</title>
        <authorList>
            <person name="Huttlin E.L."/>
            <person name="Jedrychowski M.P."/>
            <person name="Elias J.E."/>
            <person name="Goswami T."/>
            <person name="Rad R."/>
            <person name="Beausoleil S.A."/>
            <person name="Villen J."/>
            <person name="Haas W."/>
            <person name="Sowa M.E."/>
            <person name="Gygi S.P."/>
        </authorList>
    </citation>
    <scope>IDENTIFICATION BY MASS SPECTROMETRY [LARGE SCALE ANALYSIS]</scope>
    <source>
        <tissue>Brain</tissue>
        <tissue>Kidney</tissue>
        <tissue>Liver</tissue>
        <tissue>Lung</tissue>
        <tissue>Pancreas</tissue>
        <tissue>Testis</tissue>
    </source>
</reference>
<sequence>MQPPGPPPAYAPANGDFTFVSSADAEDLSGSIAAPDVKLNLGVSGDFIKESTATTFLRQRGYGWLLEVEDEDPEDNKPLLEELDIDLKDIYYKIRCVLMPMPSLGFNRQVVRDNPDFWGPLAVVLFFSMISLYGQFRVVSWIITIWIFGSLTIFLLARVLGGEVAYGQVLGVIGYSLLPLIVIAPILLVVGSFEMVSTLIKLFGVFWAAYSAASLLVGEEFKTKKPLLIYPIFLLYIYFLSLYTGV</sequence>
<proteinExistence type="evidence at protein level"/>
<feature type="chain" id="PRO_0000242633" description="Protein YIPF4">
    <location>
        <begin position="1"/>
        <end position="246"/>
    </location>
</feature>
<feature type="topological domain" description="Cytoplasmic" evidence="1">
    <location>
        <begin position="1"/>
        <end position="115"/>
    </location>
</feature>
<feature type="transmembrane region" description="Helical" evidence="2">
    <location>
        <begin position="116"/>
        <end position="136"/>
    </location>
</feature>
<feature type="topological domain" description="Lumenal" evidence="4">
    <location>
        <begin position="137"/>
        <end position="140"/>
    </location>
</feature>
<feature type="transmembrane region" description="Helical" evidence="2">
    <location>
        <begin position="141"/>
        <end position="161"/>
    </location>
</feature>
<feature type="topological domain" description="Cytoplasmic" evidence="4">
    <location>
        <begin position="162"/>
        <end position="168"/>
    </location>
</feature>
<feature type="transmembrane region" description="Helical" evidence="2">
    <location>
        <begin position="169"/>
        <end position="189"/>
    </location>
</feature>
<feature type="topological domain" description="Lumenal" evidence="4">
    <location>
        <begin position="190"/>
        <end position="197"/>
    </location>
</feature>
<feature type="transmembrane region" description="Helical" evidence="2">
    <location>
        <begin position="198"/>
        <end position="218"/>
    </location>
</feature>
<feature type="topological domain" description="Cytoplasmic" evidence="4">
    <location>
        <begin position="219"/>
        <end position="225"/>
    </location>
</feature>
<feature type="transmembrane region" description="Helical" evidence="2">
    <location>
        <begin position="226"/>
        <end position="246"/>
    </location>
</feature>
<feature type="splice variant" id="VSP_019457" description="In isoform 2." evidence="3">
    <original>MQPPGPPPAYAPANGDFTFVSSADAED</original>
    <variation>MKKQVDFDIDMEIPGDEPLRPQHLKSRGREIPELKASLDYTVIKFSACRGYILKPCLNKVEKKFQFKDEH</variation>
    <location>
        <begin position="1"/>
        <end position="27"/>
    </location>
</feature>
<evidence type="ECO:0000250" key="1">
    <source>
        <dbReference type="UniProtKB" id="Q9BSR8"/>
    </source>
</evidence>
<evidence type="ECO:0000255" key="2"/>
<evidence type="ECO:0000303" key="3">
    <source>
    </source>
</evidence>
<evidence type="ECO:0000305" key="4"/>
<organism>
    <name type="scientific">Mus musculus</name>
    <name type="common">Mouse</name>
    <dbReference type="NCBI Taxonomy" id="10090"/>
    <lineage>
        <taxon>Eukaryota</taxon>
        <taxon>Metazoa</taxon>
        <taxon>Chordata</taxon>
        <taxon>Craniata</taxon>
        <taxon>Vertebrata</taxon>
        <taxon>Euteleostomi</taxon>
        <taxon>Mammalia</taxon>
        <taxon>Eutheria</taxon>
        <taxon>Euarchontoglires</taxon>
        <taxon>Glires</taxon>
        <taxon>Rodentia</taxon>
        <taxon>Myomorpha</taxon>
        <taxon>Muroidea</taxon>
        <taxon>Muridae</taxon>
        <taxon>Murinae</taxon>
        <taxon>Mus</taxon>
        <taxon>Mus</taxon>
    </lineage>
</organism>
<accession>Q8C407</accession>
<accession>Q99KZ9</accession>
<dbReference type="EMBL" id="AK083301">
    <property type="protein sequence ID" value="BAC38852.1"/>
    <property type="molecule type" value="mRNA"/>
</dbReference>
<dbReference type="EMBL" id="AK159227">
    <property type="protein sequence ID" value="BAE34913.1"/>
    <property type="molecule type" value="mRNA"/>
</dbReference>
<dbReference type="EMBL" id="AK166347">
    <property type="protein sequence ID" value="BAE38721.1"/>
    <property type="molecule type" value="mRNA"/>
</dbReference>
<dbReference type="EMBL" id="BC003936">
    <property type="protein sequence ID" value="AAH03936.1"/>
    <property type="molecule type" value="mRNA"/>
</dbReference>
<dbReference type="CCDS" id="CCDS28971.1">
    <molecule id="Q8C407-1"/>
</dbReference>
<dbReference type="RefSeq" id="NP_080693.2">
    <molecule id="Q8C407-1"/>
    <property type="nucleotide sequence ID" value="NM_026417.4"/>
</dbReference>
<dbReference type="BioGRID" id="212491">
    <property type="interactions" value="3"/>
</dbReference>
<dbReference type="FunCoup" id="Q8C407">
    <property type="interactions" value="2806"/>
</dbReference>
<dbReference type="IntAct" id="Q8C407">
    <property type="interactions" value="2"/>
</dbReference>
<dbReference type="STRING" id="10090.ENSMUSP00000024873"/>
<dbReference type="iPTMnet" id="Q8C407"/>
<dbReference type="PhosphoSitePlus" id="Q8C407"/>
<dbReference type="jPOST" id="Q8C407"/>
<dbReference type="PaxDb" id="10090-ENSMUSP00000024873"/>
<dbReference type="PeptideAtlas" id="Q8C407"/>
<dbReference type="ProteomicsDB" id="299627">
    <molecule id="Q8C407-1"/>
</dbReference>
<dbReference type="ProteomicsDB" id="299628">
    <molecule id="Q8C407-2"/>
</dbReference>
<dbReference type="Pumba" id="Q8C407"/>
<dbReference type="TopDownProteomics" id="Q8C407-1">
    <molecule id="Q8C407-1"/>
</dbReference>
<dbReference type="Antibodypedia" id="14283">
    <property type="antibodies" value="93 antibodies from 24 providers"/>
</dbReference>
<dbReference type="DNASU" id="67864"/>
<dbReference type="Ensembl" id="ENSMUST00000024873.7">
    <molecule id="Q8C407-1"/>
    <property type="protein sequence ID" value="ENSMUSP00000024873.7"/>
    <property type="gene ID" value="ENSMUSG00000024072.10"/>
</dbReference>
<dbReference type="GeneID" id="67864"/>
<dbReference type="KEGG" id="mmu:67864"/>
<dbReference type="UCSC" id="uc008dod.2">
    <molecule id="Q8C407-1"/>
    <property type="organism name" value="mouse"/>
</dbReference>
<dbReference type="UCSC" id="uc012axg.2">
    <molecule id="Q8C407-2"/>
    <property type="organism name" value="mouse"/>
</dbReference>
<dbReference type="AGR" id="MGI:1915114"/>
<dbReference type="CTD" id="84272"/>
<dbReference type="MGI" id="MGI:1915114">
    <property type="gene designation" value="Yipf4"/>
</dbReference>
<dbReference type="VEuPathDB" id="HostDB:ENSMUSG00000024072"/>
<dbReference type="eggNOG" id="KOG3103">
    <property type="taxonomic scope" value="Eukaryota"/>
</dbReference>
<dbReference type="GeneTree" id="ENSGT00940000153168"/>
<dbReference type="HOGENOM" id="CLU_072083_0_0_1"/>
<dbReference type="InParanoid" id="Q8C407"/>
<dbReference type="OMA" id="SWIITMW"/>
<dbReference type="OrthoDB" id="77586at9989"/>
<dbReference type="PhylomeDB" id="Q8C407"/>
<dbReference type="TreeFam" id="TF315055"/>
<dbReference type="BioGRID-ORCS" id="67864">
    <property type="hits" value="1 hit in 77 CRISPR screens"/>
</dbReference>
<dbReference type="ChiTaRS" id="Yipf4">
    <property type="organism name" value="mouse"/>
</dbReference>
<dbReference type="PRO" id="PR:Q8C407"/>
<dbReference type="Proteomes" id="UP000000589">
    <property type="component" value="Chromosome 17"/>
</dbReference>
<dbReference type="RNAct" id="Q8C407">
    <property type="molecule type" value="protein"/>
</dbReference>
<dbReference type="Bgee" id="ENSMUSG00000024072">
    <property type="expression patterns" value="Expressed in seminal vesicle and 260 other cell types or tissues"/>
</dbReference>
<dbReference type="ExpressionAtlas" id="Q8C407">
    <property type="expression patterns" value="baseline and differential"/>
</dbReference>
<dbReference type="GO" id="GO:0005783">
    <property type="term" value="C:endoplasmic reticulum"/>
    <property type="evidence" value="ECO:0007669"/>
    <property type="project" value="Ensembl"/>
</dbReference>
<dbReference type="GO" id="GO:0005794">
    <property type="term" value="C:Golgi apparatus"/>
    <property type="evidence" value="ECO:0007669"/>
    <property type="project" value="UniProtKB-SubCell"/>
</dbReference>
<dbReference type="GO" id="GO:0005886">
    <property type="term" value="C:plasma membrane"/>
    <property type="evidence" value="ECO:0007669"/>
    <property type="project" value="Ensembl"/>
</dbReference>
<dbReference type="GO" id="GO:0006888">
    <property type="term" value="P:endoplasmic reticulum to Golgi vesicle-mediated transport"/>
    <property type="evidence" value="ECO:0007669"/>
    <property type="project" value="InterPro"/>
</dbReference>
<dbReference type="InterPro" id="IPR045231">
    <property type="entry name" value="Yip1/4-like"/>
</dbReference>
<dbReference type="InterPro" id="IPR006977">
    <property type="entry name" value="Yip1_dom"/>
</dbReference>
<dbReference type="PANTHER" id="PTHR21236">
    <property type="entry name" value="GOLGI MEMBRANE PROTEIN YIP1"/>
    <property type="match status" value="1"/>
</dbReference>
<dbReference type="PANTHER" id="PTHR21236:SF7">
    <property type="entry name" value="PROTEIN YIPF4"/>
    <property type="match status" value="1"/>
</dbReference>
<dbReference type="Pfam" id="PF04893">
    <property type="entry name" value="Yip1"/>
    <property type="match status" value="1"/>
</dbReference>
<protein>
    <recommendedName>
        <fullName>Protein YIPF4</fullName>
    </recommendedName>
    <alternativeName>
        <fullName>YIP1 family member 4</fullName>
    </alternativeName>
</protein>
<comment type="function">
    <text evidence="1">Involved in the maintenance of the Golgi structure.</text>
</comment>
<comment type="subunit">
    <text evidence="1">Interacts with YIPF3 and YIPF5.</text>
</comment>
<comment type="subcellular location">
    <subcellularLocation>
        <location evidence="1">Golgi apparatus</location>
        <location evidence="1">cis-Golgi network membrane</location>
        <topology>Multi-pass membrane protein</topology>
    </subcellularLocation>
</comment>
<comment type="alternative products">
    <event type="alternative splicing"/>
    <isoform>
        <id>Q8C407-1</id>
        <name>1</name>
        <sequence type="displayed"/>
    </isoform>
    <isoform>
        <id>Q8C407-2</id>
        <name>2</name>
        <sequence type="described" ref="VSP_019457"/>
    </isoform>
</comment>
<comment type="similarity">
    <text evidence="4">Belongs to the YIP1 family.</text>
</comment>